<protein>
    <recommendedName>
        <fullName evidence="1">3-phosphoshikimate 1-carboxyvinyltransferase</fullName>
        <ecNumber evidence="1">2.5.1.19</ecNumber>
    </recommendedName>
    <alternativeName>
        <fullName evidence="1">5-enolpyruvylshikimate-3-phosphate synthase</fullName>
        <shortName evidence="1">EPSP synthase</shortName>
        <shortName evidence="1">EPSPS</shortName>
    </alternativeName>
</protein>
<name>AROA_ZYMMO</name>
<organism>
    <name type="scientific">Zymomonas mobilis subsp. mobilis (strain ATCC 31821 / ZM4 / CP4)</name>
    <dbReference type="NCBI Taxonomy" id="264203"/>
    <lineage>
        <taxon>Bacteria</taxon>
        <taxon>Pseudomonadati</taxon>
        <taxon>Pseudomonadota</taxon>
        <taxon>Alphaproteobacteria</taxon>
        <taxon>Sphingomonadales</taxon>
        <taxon>Zymomonadaceae</taxon>
        <taxon>Zymomonas</taxon>
    </lineage>
</organism>
<feature type="chain" id="PRO_1000058620" description="3-phosphoshikimate 1-carboxyvinyltransferase">
    <location>
        <begin position="1"/>
        <end position="453"/>
    </location>
</feature>
<feature type="active site" description="Proton acceptor" evidence="1">
    <location>
        <position position="326"/>
    </location>
</feature>
<feature type="binding site" evidence="1">
    <location>
        <position position="28"/>
    </location>
    <ligand>
        <name>3-phosphoshikimate</name>
        <dbReference type="ChEBI" id="CHEBI:145989"/>
    </ligand>
</feature>
<feature type="binding site" evidence="1">
    <location>
        <position position="28"/>
    </location>
    <ligand>
        <name>phosphoenolpyruvate</name>
        <dbReference type="ChEBI" id="CHEBI:58702"/>
    </ligand>
</feature>
<feature type="binding site" evidence="1">
    <location>
        <position position="29"/>
    </location>
    <ligand>
        <name>3-phosphoshikimate</name>
        <dbReference type="ChEBI" id="CHEBI:145989"/>
    </ligand>
</feature>
<feature type="binding site" evidence="1">
    <location>
        <position position="33"/>
    </location>
    <ligand>
        <name>3-phosphoshikimate</name>
        <dbReference type="ChEBI" id="CHEBI:145989"/>
    </ligand>
</feature>
<feature type="binding site" evidence="1">
    <location>
        <position position="101"/>
    </location>
    <ligand>
        <name>phosphoenolpyruvate</name>
        <dbReference type="ChEBI" id="CHEBI:58702"/>
    </ligand>
</feature>
<feature type="binding site" evidence="1">
    <location>
        <position position="129"/>
    </location>
    <ligand>
        <name>phosphoenolpyruvate</name>
        <dbReference type="ChEBI" id="CHEBI:58702"/>
    </ligand>
</feature>
<feature type="binding site" evidence="1">
    <location>
        <position position="174"/>
    </location>
    <ligand>
        <name>3-phosphoshikimate</name>
        <dbReference type="ChEBI" id="CHEBI:145989"/>
    </ligand>
</feature>
<feature type="binding site" evidence="1">
    <location>
        <position position="176"/>
    </location>
    <ligand>
        <name>3-phosphoshikimate</name>
        <dbReference type="ChEBI" id="CHEBI:145989"/>
    </ligand>
</feature>
<feature type="binding site" evidence="1">
    <location>
        <position position="176"/>
    </location>
    <ligand>
        <name>phosphoenolpyruvate</name>
        <dbReference type="ChEBI" id="CHEBI:58702"/>
    </ligand>
</feature>
<feature type="binding site" evidence="1">
    <location>
        <position position="326"/>
    </location>
    <ligand>
        <name>3-phosphoshikimate</name>
        <dbReference type="ChEBI" id="CHEBI:145989"/>
    </ligand>
</feature>
<feature type="binding site" evidence="1">
    <location>
        <position position="353"/>
    </location>
    <ligand>
        <name>3-phosphoshikimate</name>
        <dbReference type="ChEBI" id="CHEBI:145989"/>
    </ligand>
</feature>
<feature type="binding site" evidence="1">
    <location>
        <position position="357"/>
    </location>
    <ligand>
        <name>phosphoenolpyruvate</name>
        <dbReference type="ChEBI" id="CHEBI:58702"/>
    </ligand>
</feature>
<feature type="binding site" evidence="1">
    <location>
        <position position="405"/>
    </location>
    <ligand>
        <name>phosphoenolpyruvate</name>
        <dbReference type="ChEBI" id="CHEBI:58702"/>
    </ligand>
</feature>
<comment type="function">
    <text evidence="1">Catalyzes the transfer of the enolpyruvyl moiety of phosphoenolpyruvate (PEP) to the 5-hydroxyl of shikimate-3-phosphate (S3P) to produce enolpyruvyl shikimate-3-phosphate and inorganic phosphate.</text>
</comment>
<comment type="catalytic activity">
    <reaction evidence="1">
        <text>3-phosphoshikimate + phosphoenolpyruvate = 5-O-(1-carboxyvinyl)-3-phosphoshikimate + phosphate</text>
        <dbReference type="Rhea" id="RHEA:21256"/>
        <dbReference type="ChEBI" id="CHEBI:43474"/>
        <dbReference type="ChEBI" id="CHEBI:57701"/>
        <dbReference type="ChEBI" id="CHEBI:58702"/>
        <dbReference type="ChEBI" id="CHEBI:145989"/>
        <dbReference type="EC" id="2.5.1.19"/>
    </reaction>
    <physiologicalReaction direction="left-to-right" evidence="1">
        <dbReference type="Rhea" id="RHEA:21257"/>
    </physiologicalReaction>
</comment>
<comment type="pathway">
    <text evidence="1">Metabolic intermediate biosynthesis; chorismate biosynthesis; chorismate from D-erythrose 4-phosphate and phosphoenolpyruvate: step 6/7.</text>
</comment>
<comment type="subunit">
    <text evidence="1">Monomer.</text>
</comment>
<comment type="subcellular location">
    <subcellularLocation>
        <location evidence="1">Cytoplasm</location>
    </subcellularLocation>
</comment>
<comment type="similarity">
    <text evidence="1">Belongs to the EPSP synthase family.</text>
</comment>
<dbReference type="EC" id="2.5.1.19" evidence="1"/>
<dbReference type="EMBL" id="AE008692">
    <property type="protein sequence ID" value="AAV90420.1"/>
    <property type="molecule type" value="Genomic_DNA"/>
</dbReference>
<dbReference type="RefSeq" id="WP_011241530.1">
    <property type="nucleotide sequence ID" value="NZ_CP035711.1"/>
</dbReference>
<dbReference type="SMR" id="Q5NLJ0"/>
<dbReference type="STRING" id="264203.ZMO1796"/>
<dbReference type="KEGG" id="zmo:ZMO1796"/>
<dbReference type="eggNOG" id="COG0128">
    <property type="taxonomic scope" value="Bacteria"/>
</dbReference>
<dbReference type="HOGENOM" id="CLU_024321_0_1_5"/>
<dbReference type="UniPathway" id="UPA00053">
    <property type="reaction ID" value="UER00089"/>
</dbReference>
<dbReference type="Proteomes" id="UP000001173">
    <property type="component" value="Chromosome"/>
</dbReference>
<dbReference type="GO" id="GO:0005737">
    <property type="term" value="C:cytoplasm"/>
    <property type="evidence" value="ECO:0007669"/>
    <property type="project" value="UniProtKB-SubCell"/>
</dbReference>
<dbReference type="GO" id="GO:0003866">
    <property type="term" value="F:3-phosphoshikimate 1-carboxyvinyltransferase activity"/>
    <property type="evidence" value="ECO:0007669"/>
    <property type="project" value="UniProtKB-UniRule"/>
</dbReference>
<dbReference type="GO" id="GO:0008652">
    <property type="term" value="P:amino acid biosynthetic process"/>
    <property type="evidence" value="ECO:0007669"/>
    <property type="project" value="UniProtKB-KW"/>
</dbReference>
<dbReference type="GO" id="GO:0009073">
    <property type="term" value="P:aromatic amino acid family biosynthetic process"/>
    <property type="evidence" value="ECO:0007669"/>
    <property type="project" value="UniProtKB-KW"/>
</dbReference>
<dbReference type="GO" id="GO:0009423">
    <property type="term" value="P:chorismate biosynthetic process"/>
    <property type="evidence" value="ECO:0007669"/>
    <property type="project" value="UniProtKB-UniRule"/>
</dbReference>
<dbReference type="CDD" id="cd01556">
    <property type="entry name" value="EPSP_synthase"/>
    <property type="match status" value="1"/>
</dbReference>
<dbReference type="FunFam" id="3.65.10.10:FF:000006">
    <property type="entry name" value="3-phosphoshikimate 1-carboxyvinyltransferase"/>
    <property type="match status" value="1"/>
</dbReference>
<dbReference type="Gene3D" id="3.65.10.10">
    <property type="entry name" value="Enolpyruvate transferase domain"/>
    <property type="match status" value="2"/>
</dbReference>
<dbReference type="HAMAP" id="MF_00210">
    <property type="entry name" value="EPSP_synth"/>
    <property type="match status" value="1"/>
</dbReference>
<dbReference type="InterPro" id="IPR001986">
    <property type="entry name" value="Enolpyruvate_Tfrase_dom"/>
</dbReference>
<dbReference type="InterPro" id="IPR036968">
    <property type="entry name" value="Enolpyruvate_Tfrase_sf"/>
</dbReference>
<dbReference type="InterPro" id="IPR006264">
    <property type="entry name" value="EPSP_synthase"/>
</dbReference>
<dbReference type="InterPro" id="IPR023193">
    <property type="entry name" value="EPSP_synthase_CS"/>
</dbReference>
<dbReference type="InterPro" id="IPR013792">
    <property type="entry name" value="RNA3'P_cycl/enolpyr_Trfase_a/b"/>
</dbReference>
<dbReference type="NCBIfam" id="TIGR01356">
    <property type="entry name" value="aroA"/>
    <property type="match status" value="1"/>
</dbReference>
<dbReference type="PANTHER" id="PTHR21090">
    <property type="entry name" value="AROM/DEHYDROQUINATE SYNTHASE"/>
    <property type="match status" value="1"/>
</dbReference>
<dbReference type="PANTHER" id="PTHR21090:SF5">
    <property type="entry name" value="PENTAFUNCTIONAL AROM POLYPEPTIDE"/>
    <property type="match status" value="1"/>
</dbReference>
<dbReference type="Pfam" id="PF00275">
    <property type="entry name" value="EPSP_synthase"/>
    <property type="match status" value="1"/>
</dbReference>
<dbReference type="PIRSF" id="PIRSF000505">
    <property type="entry name" value="EPSPS"/>
    <property type="match status" value="1"/>
</dbReference>
<dbReference type="SUPFAM" id="SSF55205">
    <property type="entry name" value="EPT/RTPC-like"/>
    <property type="match status" value="1"/>
</dbReference>
<dbReference type="PROSITE" id="PS00104">
    <property type="entry name" value="EPSP_SYNTHASE_1"/>
    <property type="match status" value="1"/>
</dbReference>
<dbReference type="PROSITE" id="PS00885">
    <property type="entry name" value="EPSP_SYNTHASE_2"/>
    <property type="match status" value="1"/>
</dbReference>
<gene>
    <name evidence="1" type="primary">aroA</name>
    <name type="ordered locus">ZMO1796</name>
</gene>
<reference key="1">
    <citation type="journal article" date="2005" name="Nat. Biotechnol.">
        <title>The genome sequence of the ethanologenic bacterium Zymomonas mobilis ZM4.</title>
        <authorList>
            <person name="Seo J.-S."/>
            <person name="Chong H."/>
            <person name="Park H.S."/>
            <person name="Yoon K.-O."/>
            <person name="Jung C."/>
            <person name="Kim J.J."/>
            <person name="Hong J.H."/>
            <person name="Kim H."/>
            <person name="Kim J.-H."/>
            <person name="Kil J.-I."/>
            <person name="Park C.J."/>
            <person name="Oh H.-M."/>
            <person name="Lee J.-S."/>
            <person name="Jin S.-J."/>
            <person name="Um H.-W."/>
            <person name="Lee H.-J."/>
            <person name="Oh S.-J."/>
            <person name="Kim J.Y."/>
            <person name="Kang H.L."/>
            <person name="Lee S.Y."/>
            <person name="Lee K.J."/>
            <person name="Kang H.S."/>
        </authorList>
    </citation>
    <scope>NUCLEOTIDE SEQUENCE [LARGE SCALE GENOMIC DNA]</scope>
    <source>
        <strain>ATCC 31821 / ZM4 / CP4</strain>
    </source>
</reference>
<accession>Q5NLJ0</accession>
<keyword id="KW-0028">Amino-acid biosynthesis</keyword>
<keyword id="KW-0057">Aromatic amino acid biosynthesis</keyword>
<keyword id="KW-0963">Cytoplasm</keyword>
<keyword id="KW-1185">Reference proteome</keyword>
<keyword id="KW-0808">Transferase</keyword>
<evidence type="ECO:0000255" key="1">
    <source>
        <dbReference type="HAMAP-Rule" id="MF_00210"/>
    </source>
</evidence>
<sequence>MTRPVHACPLVSRKAPPLSGKVHVPGDKSISHRALMLSALAVGESFVEGLLEGEDVLATAEAMRSMGADIRKDEKGCWHIHGVGVGSLLQPQNALDMGNSGTSTRLLMGVVASHPITATFIGDASLSKRPMGRISTPLSLMGARFSAAEGNRLPMTVTGLYPAIPIEYRLPVASAQVKSAILLAGLNTPGITRVIEPVPTRDHSERMLKGYGANLSVEENDGVRIISIHGEAELKPQHIIVPGDPSSAAFLVVAGLIVPGSDLIVENVGLNPTRSGLYTMLKAMGGQIEYLNPREVGGEPVADLSVKYSHLKAIDVPPSIVPSMIDEFPILFIAAAMAEGKSTLQGLAELRVKESDRIAVMAEGLKALGVSLEEKEDGLIIEGSAGEGLGQKGKMVSIAAHLDHRIAMSFAVAGLVSEGGVTIDDRRPIMTSFPVFGQLFKELGAEFEMGLVK</sequence>
<proteinExistence type="inferred from homology"/>